<dbReference type="EMBL" id="AY653733">
    <property type="protein sequence ID" value="AAV50835.1"/>
    <property type="molecule type" value="Genomic_DNA"/>
</dbReference>
<dbReference type="SMR" id="Q5UR45"/>
<dbReference type="Proteomes" id="UP000001134">
    <property type="component" value="Genome"/>
</dbReference>
<dbReference type="GO" id="GO:0005524">
    <property type="term" value="F:ATP binding"/>
    <property type="evidence" value="ECO:0007669"/>
    <property type="project" value="UniProtKB-KW"/>
</dbReference>
<dbReference type="GO" id="GO:0016887">
    <property type="term" value="F:ATP hydrolysis activity"/>
    <property type="evidence" value="ECO:0007669"/>
    <property type="project" value="InterPro"/>
</dbReference>
<dbReference type="Gene3D" id="3.40.50.300">
    <property type="entry name" value="P-loop containing nucleotide triphosphate hydrolases"/>
    <property type="match status" value="1"/>
</dbReference>
<dbReference type="InterPro" id="IPR003959">
    <property type="entry name" value="ATPase_AAA_core"/>
</dbReference>
<dbReference type="InterPro" id="IPR003960">
    <property type="entry name" value="ATPase_AAA_CS"/>
</dbReference>
<dbReference type="InterPro" id="IPR050747">
    <property type="entry name" value="Mitochondrial_chaperone_BCS1"/>
</dbReference>
<dbReference type="InterPro" id="IPR027417">
    <property type="entry name" value="P-loop_NTPase"/>
</dbReference>
<dbReference type="PANTHER" id="PTHR23070">
    <property type="entry name" value="BCS1 AAA-TYPE ATPASE"/>
    <property type="match status" value="1"/>
</dbReference>
<dbReference type="Pfam" id="PF00004">
    <property type="entry name" value="AAA"/>
    <property type="match status" value="1"/>
</dbReference>
<dbReference type="Pfam" id="PF25426">
    <property type="entry name" value="AAA_lid_BCS1"/>
    <property type="match status" value="1"/>
</dbReference>
<dbReference type="SUPFAM" id="SSF52540">
    <property type="entry name" value="P-loop containing nucleoside triphosphate hydrolases"/>
    <property type="match status" value="1"/>
</dbReference>
<dbReference type="PROSITE" id="PS00674">
    <property type="entry name" value="AAA"/>
    <property type="match status" value="1"/>
</dbReference>
<protein>
    <recommendedName>
        <fullName>Putative AAA family ATPase L572</fullName>
    </recommendedName>
</protein>
<feature type="chain" id="PRO_0000247282" description="Putative AAA family ATPase L572">
    <location>
        <begin position="1"/>
        <end position="196"/>
    </location>
</feature>
<feature type="binding site" evidence="1">
    <location>
        <begin position="32"/>
        <end position="39"/>
    </location>
    <ligand>
        <name>ATP</name>
        <dbReference type="ChEBI" id="CHEBI:30616"/>
    </ligand>
</feature>
<accession>Q5UR45</accession>
<sequence>MIKAISTHTKRHIHYLILNNIQDDNELINLLNAVNCKETILVLEDIDCASEAVKSRAKEEETVVEKVTDDKSTLENKILADQLKKVEKVSKLTLSGILNSLDGIFNSEGRIVIMTTNHSEVLDPALIRRGRIDMQIEFSNCDRYQIAKMYENFYGKNADSDILSKIPSDIYSPAHVSGLLLSYRNNPENSLIELTQ</sequence>
<organism>
    <name type="scientific">Acanthamoeba polyphaga mimivirus</name>
    <name type="common">APMV</name>
    <dbReference type="NCBI Taxonomy" id="212035"/>
    <lineage>
        <taxon>Viruses</taxon>
        <taxon>Varidnaviria</taxon>
        <taxon>Bamfordvirae</taxon>
        <taxon>Nucleocytoviricota</taxon>
        <taxon>Megaviricetes</taxon>
        <taxon>Imitervirales</taxon>
        <taxon>Mimiviridae</taxon>
        <taxon>Megamimivirinae</taxon>
        <taxon>Mimivirus</taxon>
        <taxon>Mimivirus bradfordmassiliense</taxon>
    </lineage>
</organism>
<keyword id="KW-0067">ATP-binding</keyword>
<keyword id="KW-0547">Nucleotide-binding</keyword>
<keyword id="KW-1185">Reference proteome</keyword>
<organismHost>
    <name type="scientific">Acanthamoeba polyphaga</name>
    <name type="common">Amoeba</name>
    <dbReference type="NCBI Taxonomy" id="5757"/>
</organismHost>
<gene>
    <name type="ordered locus">MIMI_L572</name>
</gene>
<comment type="similarity">
    <text evidence="2">Belongs to the AAA ATPase family.</text>
</comment>
<proteinExistence type="inferred from homology"/>
<name>YL572_MIMIV</name>
<reference key="1">
    <citation type="journal article" date="2004" name="Science">
        <title>The 1.2-megabase genome sequence of Mimivirus.</title>
        <authorList>
            <person name="Raoult D."/>
            <person name="Audic S."/>
            <person name="Robert C."/>
            <person name="Abergel C."/>
            <person name="Renesto P."/>
            <person name="Ogata H."/>
            <person name="La Scola B."/>
            <person name="Susan M."/>
            <person name="Claverie J.-M."/>
        </authorList>
    </citation>
    <scope>NUCLEOTIDE SEQUENCE [LARGE SCALE GENOMIC DNA]</scope>
    <source>
        <strain>Rowbotham-Bradford</strain>
    </source>
</reference>
<evidence type="ECO:0000255" key="1"/>
<evidence type="ECO:0000305" key="2"/>